<sequence length="580" mass="65506">MATPAGRRASETERLLTPNPGYGTQVGTSPAPTTPTEEEDLRRRLKYFFMSPCDKFRAKGRKPCKLMLQVVKILVVTVQLILFGLSNQLVVTFREENTIAFRHLFLLGYSDGSDDTFAAYTQEQLYQAIFYAVDQYLILPEISLGRYAYVRGGGGPWANGSALALCQRYYHRGHVDPANDTFDIDPRVVTDCIQVDPPDRPPDIPSEDLDFLDGSASYKNLTLKFHKLINVTIHFQLKTINLQSLINNEIPDCYTFSILITFDNKAHSGRIPIRLETKTHIQECKHPSVSRHGDNSFRLLFDVVVILTCSLSFLLCARSLLRGFLLQNEFVVFMWRRRGREISLWERLEFVNGWYILLVTSDVLTISGTVMKIGIEAKNLASYDVCSILLGTSTLLVWVGVIRYLTFFHKYNILIATLRVALPSVMRFCCCVAVIYLGYCFCGWIVLGPYHVKFRSLSMVSECLFSLINGDDMFVTFAAMQAQQGHSSLVWLFSQLYLYSFISLFIYMVLSLFIALITGAYDTIKHPGGTGTEKSELQAYIEQCQDSPTSGKFRRGSGSACSLFCCCGRDSPEDHSLLVN</sequence>
<name>MCLN1_MOUSE</name>
<dbReference type="EMBL" id="AF302009">
    <property type="protein sequence ID" value="AAL58667.1"/>
    <property type="molecule type" value="mRNA"/>
</dbReference>
<dbReference type="EMBL" id="AK028385">
    <property type="protein sequence ID" value="BAC25922.1"/>
    <property type="molecule type" value="mRNA"/>
</dbReference>
<dbReference type="EMBL" id="AK034471">
    <property type="protein sequence ID" value="BAC28719.1"/>
    <property type="molecule type" value="mRNA"/>
</dbReference>
<dbReference type="EMBL" id="AK049606">
    <property type="protein sequence ID" value="BAC33838.1"/>
    <property type="molecule type" value="mRNA"/>
</dbReference>
<dbReference type="EMBL" id="BC005651">
    <property type="protein sequence ID" value="AAH05651.1"/>
    <property type="molecule type" value="mRNA"/>
</dbReference>
<dbReference type="CCDS" id="CCDS22063.1">
    <molecule id="Q99J21-1"/>
</dbReference>
<dbReference type="RefSeq" id="NP_444407.1">
    <molecule id="Q99J21-1"/>
    <property type="nucleotide sequence ID" value="NM_053177.1"/>
</dbReference>
<dbReference type="PDB" id="5WPQ">
    <property type="method" value="EM"/>
    <property type="resolution" value="3.64 A"/>
    <property type="chains" value="A/B/C/D=1-580"/>
</dbReference>
<dbReference type="PDB" id="5WPT">
    <property type="method" value="EM"/>
    <property type="resolution" value="3.75 A"/>
    <property type="chains" value="A/B/C/D=1-580"/>
</dbReference>
<dbReference type="PDB" id="5WPV">
    <property type="method" value="EM"/>
    <property type="resolution" value="3.59 A"/>
    <property type="chains" value="A/B/C/D=1-580"/>
</dbReference>
<dbReference type="PDB" id="5YDZ">
    <property type="method" value="EM"/>
    <property type="resolution" value="5.80 A"/>
    <property type="chains" value="A/B/C/D=1-580"/>
</dbReference>
<dbReference type="PDB" id="5YE1">
    <property type="method" value="EM"/>
    <property type="resolution" value="5.80 A"/>
    <property type="chains" value="A/B/C/D=1-580"/>
</dbReference>
<dbReference type="PDB" id="5YE2">
    <property type="method" value="EM"/>
    <property type="resolution" value="5.80 A"/>
    <property type="chains" value="A/B/C/D=1-580"/>
</dbReference>
<dbReference type="PDB" id="5YE5">
    <property type="method" value="EM"/>
    <property type="resolution" value="5.80 A"/>
    <property type="chains" value="A/B/C/D=1-580"/>
</dbReference>
<dbReference type="PDB" id="7SQ6">
    <property type="method" value="EM"/>
    <property type="resolution" value="2.32 A"/>
    <property type="chains" value="A/B/C/D=1-580"/>
</dbReference>
<dbReference type="PDB" id="7SQ7">
    <property type="method" value="EM"/>
    <property type="resolution" value="2.41 A"/>
    <property type="chains" value="A/B/C/D=1-580"/>
</dbReference>
<dbReference type="PDB" id="7SQ8">
    <property type="method" value="EM"/>
    <property type="resolution" value="2.60 A"/>
    <property type="chains" value="A/B/C/D=1-580"/>
</dbReference>
<dbReference type="PDB" id="7SQ9">
    <property type="method" value="EM"/>
    <property type="resolution" value="2.11 A"/>
    <property type="chains" value="A/B/C/D=1-580"/>
</dbReference>
<dbReference type="PDB" id="9CBZ">
    <property type="method" value="EM"/>
    <property type="resolution" value="2.86 A"/>
    <property type="chains" value="A/B/C/D=1-580"/>
</dbReference>
<dbReference type="PDB" id="9CC2">
    <property type="method" value="EM"/>
    <property type="resolution" value="2.46 A"/>
    <property type="chains" value="A/B/C/D=1-580"/>
</dbReference>
<dbReference type="PDBsum" id="5WPQ"/>
<dbReference type="PDBsum" id="5WPT"/>
<dbReference type="PDBsum" id="5WPV"/>
<dbReference type="PDBsum" id="5YDZ"/>
<dbReference type="PDBsum" id="5YE1"/>
<dbReference type="PDBsum" id="5YE2"/>
<dbReference type="PDBsum" id="5YE5"/>
<dbReference type="PDBsum" id="7SQ6"/>
<dbReference type="PDBsum" id="7SQ7"/>
<dbReference type="PDBsum" id="7SQ8"/>
<dbReference type="PDBsum" id="7SQ9"/>
<dbReference type="PDBsum" id="9CBZ"/>
<dbReference type="PDBsum" id="9CC2"/>
<dbReference type="EMDB" id="EMD-25377"/>
<dbReference type="EMDB" id="EMD-25378"/>
<dbReference type="EMDB" id="EMD-25379"/>
<dbReference type="EMDB" id="EMD-25380"/>
<dbReference type="EMDB" id="EMD-45429"/>
<dbReference type="EMDB" id="EMD-45432"/>
<dbReference type="EMDB" id="EMD-6823"/>
<dbReference type="EMDB" id="EMD-6824"/>
<dbReference type="EMDB" id="EMD-6825"/>
<dbReference type="EMDB" id="EMD-6826"/>
<dbReference type="EMDB" id="EMD-8881"/>
<dbReference type="EMDB" id="EMD-8882"/>
<dbReference type="EMDB" id="EMD-8883"/>
<dbReference type="SMR" id="Q99J21"/>
<dbReference type="FunCoup" id="Q99J21">
    <property type="interactions" value="3045"/>
</dbReference>
<dbReference type="STRING" id="10090.ENSMUSP00000004683"/>
<dbReference type="GlyConnect" id="2514">
    <property type="glycosylation" value="2 N-Linked glycans (1 site)"/>
</dbReference>
<dbReference type="GlyCosmos" id="Q99J21">
    <property type="glycosylation" value="3 sites, 2 glycans"/>
</dbReference>
<dbReference type="GlyGen" id="Q99J21">
    <property type="glycosylation" value="5 sites, 5 N-linked glycans (3 sites), 1 O-linked glycan (1 site)"/>
</dbReference>
<dbReference type="iPTMnet" id="Q99J21"/>
<dbReference type="PhosphoSitePlus" id="Q99J21"/>
<dbReference type="SwissPalm" id="Q99J21"/>
<dbReference type="jPOST" id="Q99J21"/>
<dbReference type="PaxDb" id="10090-ENSMUSP00000004683"/>
<dbReference type="PeptideAtlas" id="Q99J21"/>
<dbReference type="ProteomicsDB" id="252749">
    <molecule id="Q99J21-1"/>
</dbReference>
<dbReference type="ProteomicsDB" id="252750">
    <molecule id="Q99J21-2"/>
</dbReference>
<dbReference type="Pumba" id="Q99J21"/>
<dbReference type="Antibodypedia" id="12053">
    <property type="antibodies" value="178 antibodies from 22 providers"/>
</dbReference>
<dbReference type="DNASU" id="94178"/>
<dbReference type="Ensembl" id="ENSMUST00000004683.13">
    <molecule id="Q99J21-1"/>
    <property type="protein sequence ID" value="ENSMUSP00000004683.7"/>
    <property type="gene ID" value="ENSMUSG00000004567.17"/>
</dbReference>
<dbReference type="GeneID" id="94178"/>
<dbReference type="KEGG" id="mmu:94178"/>
<dbReference type="UCSC" id="uc009krq.1">
    <molecule id="Q99J21-1"/>
    <property type="organism name" value="mouse"/>
</dbReference>
<dbReference type="AGR" id="MGI:1890498"/>
<dbReference type="CTD" id="57192"/>
<dbReference type="MGI" id="MGI:1890498">
    <property type="gene designation" value="Mcoln1"/>
</dbReference>
<dbReference type="VEuPathDB" id="HostDB:ENSMUSG00000004567"/>
<dbReference type="eggNOG" id="KOG3733">
    <property type="taxonomic scope" value="Eukaryota"/>
</dbReference>
<dbReference type="GeneTree" id="ENSGT00950000183036"/>
<dbReference type="HOGENOM" id="CLU_020945_1_1_1"/>
<dbReference type="InParanoid" id="Q99J21"/>
<dbReference type="OMA" id="SPMQENV"/>
<dbReference type="OrthoDB" id="263481at2759"/>
<dbReference type="PhylomeDB" id="Q99J21"/>
<dbReference type="TreeFam" id="TF317783"/>
<dbReference type="Reactome" id="R-MMU-3295583">
    <property type="pathway name" value="TRP channels"/>
</dbReference>
<dbReference type="Reactome" id="R-MMU-917977">
    <property type="pathway name" value="Transferrin endocytosis and recycling"/>
</dbReference>
<dbReference type="BioGRID-ORCS" id="94178">
    <property type="hits" value="3 hits in 79 CRISPR screens"/>
</dbReference>
<dbReference type="ChiTaRS" id="Mcoln1">
    <property type="organism name" value="mouse"/>
</dbReference>
<dbReference type="PRO" id="PR:Q99J21"/>
<dbReference type="Proteomes" id="UP000000589">
    <property type="component" value="Chromosome 8"/>
</dbReference>
<dbReference type="RNAct" id="Q99J21">
    <property type="molecule type" value="protein"/>
</dbReference>
<dbReference type="Bgee" id="ENSMUSG00000004567">
    <property type="expression patterns" value="Expressed in retinal neural layer and 206 other cell types or tissues"/>
</dbReference>
<dbReference type="ExpressionAtlas" id="Q99J21">
    <property type="expression patterns" value="baseline and differential"/>
</dbReference>
<dbReference type="GO" id="GO:0042995">
    <property type="term" value="C:cell projection"/>
    <property type="evidence" value="ECO:0007669"/>
    <property type="project" value="UniProtKB-KW"/>
</dbReference>
<dbReference type="GO" id="GO:0005794">
    <property type="term" value="C:Golgi apparatus"/>
    <property type="evidence" value="ECO:0007669"/>
    <property type="project" value="Ensembl"/>
</dbReference>
<dbReference type="GO" id="GO:0097708">
    <property type="term" value="C:intracellular vesicle"/>
    <property type="evidence" value="ECO:0000269"/>
    <property type="project" value="MGI"/>
</dbReference>
<dbReference type="GO" id="GO:0005770">
    <property type="term" value="C:late endosome"/>
    <property type="evidence" value="ECO:0000250"/>
    <property type="project" value="UniProtKB"/>
</dbReference>
<dbReference type="GO" id="GO:0031902">
    <property type="term" value="C:late endosome membrane"/>
    <property type="evidence" value="ECO:0007669"/>
    <property type="project" value="UniProtKB-SubCell"/>
</dbReference>
<dbReference type="GO" id="GO:0005765">
    <property type="term" value="C:lysosomal membrane"/>
    <property type="evidence" value="ECO:0000250"/>
    <property type="project" value="UniProtKB"/>
</dbReference>
<dbReference type="GO" id="GO:0005764">
    <property type="term" value="C:lysosome"/>
    <property type="evidence" value="ECO:0000250"/>
    <property type="project" value="UniProtKB"/>
</dbReference>
<dbReference type="GO" id="GO:0016020">
    <property type="term" value="C:membrane"/>
    <property type="evidence" value="ECO:0000314"/>
    <property type="project" value="UniProtKB"/>
</dbReference>
<dbReference type="GO" id="GO:0005654">
    <property type="term" value="C:nucleoplasm"/>
    <property type="evidence" value="ECO:0007669"/>
    <property type="project" value="Ensembl"/>
</dbReference>
<dbReference type="GO" id="GO:0001891">
    <property type="term" value="C:phagocytic cup"/>
    <property type="evidence" value="ECO:0007669"/>
    <property type="project" value="UniProtKB-SubCell"/>
</dbReference>
<dbReference type="GO" id="GO:0030670">
    <property type="term" value="C:phagocytic vesicle membrane"/>
    <property type="evidence" value="ECO:0007669"/>
    <property type="project" value="UniProtKB-SubCell"/>
</dbReference>
<dbReference type="GO" id="GO:0043235">
    <property type="term" value="C:receptor complex"/>
    <property type="evidence" value="ECO:0000266"/>
    <property type="project" value="MGI"/>
</dbReference>
<dbReference type="GO" id="GO:0005262">
    <property type="term" value="F:calcium channel activity"/>
    <property type="evidence" value="ECO:0000314"/>
    <property type="project" value="UniProtKB"/>
</dbReference>
<dbReference type="GO" id="GO:0042802">
    <property type="term" value="F:identical protein binding"/>
    <property type="evidence" value="ECO:0007669"/>
    <property type="project" value="Ensembl"/>
</dbReference>
<dbReference type="GO" id="GO:0097682">
    <property type="term" value="F:intracellularly phosphatidylinositol-3,5-bisphosphate-gated monatomic cation channel activity"/>
    <property type="evidence" value="ECO:0000314"/>
    <property type="project" value="UniProtKB"/>
</dbReference>
<dbReference type="GO" id="GO:0005381">
    <property type="term" value="F:iron ion transmembrane transporter activity"/>
    <property type="evidence" value="ECO:0000315"/>
    <property type="project" value="UniProtKB"/>
</dbReference>
<dbReference type="GO" id="GO:0008289">
    <property type="term" value="F:lipid binding"/>
    <property type="evidence" value="ECO:0007669"/>
    <property type="project" value="UniProtKB-KW"/>
</dbReference>
<dbReference type="GO" id="GO:0005253">
    <property type="term" value="F:monoatomic anion channel activity"/>
    <property type="evidence" value="ECO:0000314"/>
    <property type="project" value="UniProtKB"/>
</dbReference>
<dbReference type="GO" id="GO:0005261">
    <property type="term" value="F:monoatomic cation channel activity"/>
    <property type="evidence" value="ECO:0000266"/>
    <property type="project" value="MGI"/>
</dbReference>
<dbReference type="GO" id="GO:0072345">
    <property type="term" value="F:NAADP-sensitive calcium-release channel activity"/>
    <property type="evidence" value="ECO:0007669"/>
    <property type="project" value="Ensembl"/>
</dbReference>
<dbReference type="GO" id="GO:0005267">
    <property type="term" value="F:potassium channel activity"/>
    <property type="evidence" value="ECO:0000314"/>
    <property type="project" value="UniProtKB"/>
</dbReference>
<dbReference type="GO" id="GO:0005272">
    <property type="term" value="F:sodium channel activity"/>
    <property type="evidence" value="ECO:0000314"/>
    <property type="project" value="UniProtKB"/>
</dbReference>
<dbReference type="GO" id="GO:0002250">
    <property type="term" value="P:adaptive immune response"/>
    <property type="evidence" value="ECO:0007669"/>
    <property type="project" value="UniProtKB-KW"/>
</dbReference>
<dbReference type="GO" id="GO:0097352">
    <property type="term" value="P:autophagosome maturation"/>
    <property type="evidence" value="ECO:0000315"/>
    <property type="project" value="MGI"/>
</dbReference>
<dbReference type="GO" id="GO:1901660">
    <property type="term" value="P:calcium ion export"/>
    <property type="evidence" value="ECO:0000250"/>
    <property type="project" value="UniProtKB"/>
</dbReference>
<dbReference type="GO" id="GO:0071277">
    <property type="term" value="P:cellular response to calcium ion"/>
    <property type="evidence" value="ECO:0000315"/>
    <property type="project" value="UniProtKB"/>
</dbReference>
<dbReference type="GO" id="GO:0071467">
    <property type="term" value="P:cellular response to pH"/>
    <property type="evidence" value="ECO:0000315"/>
    <property type="project" value="UniProtKB"/>
</dbReference>
<dbReference type="GO" id="GO:0016197">
    <property type="term" value="P:endosomal transport"/>
    <property type="evidence" value="ECO:0000266"/>
    <property type="project" value="MGI"/>
</dbReference>
<dbReference type="GO" id="GO:0034755">
    <property type="term" value="P:iron ion transmembrane transport"/>
    <property type="evidence" value="ECO:0000315"/>
    <property type="project" value="UniProtKB"/>
</dbReference>
<dbReference type="GO" id="GO:0098655">
    <property type="term" value="P:monoatomic cation transmembrane transport"/>
    <property type="evidence" value="ECO:0000314"/>
    <property type="project" value="UniProtKB"/>
</dbReference>
<dbReference type="GO" id="GO:0090382">
    <property type="term" value="P:phagosome maturation"/>
    <property type="evidence" value="ECO:0000314"/>
    <property type="project" value="UniProtKB"/>
</dbReference>
<dbReference type="GO" id="GO:1905673">
    <property type="term" value="P:positive regulation of lysosome organization"/>
    <property type="evidence" value="ECO:0000250"/>
    <property type="project" value="UniProtKB"/>
</dbReference>
<dbReference type="GO" id="GO:0051289">
    <property type="term" value="P:protein homotetramerization"/>
    <property type="evidence" value="ECO:0000314"/>
    <property type="project" value="UniProtKB"/>
</dbReference>
<dbReference type="GO" id="GO:0051209">
    <property type="term" value="P:release of sequestered calcium ion into cytosol"/>
    <property type="evidence" value="ECO:0007669"/>
    <property type="project" value="Ensembl"/>
</dbReference>
<dbReference type="CDD" id="cd21070">
    <property type="entry name" value="ELD_TRPML1"/>
    <property type="match status" value="1"/>
</dbReference>
<dbReference type="FunFam" id="1.10.287.70:FF:000033">
    <property type="entry name" value="Mucolipin 1"/>
    <property type="match status" value="1"/>
</dbReference>
<dbReference type="Gene3D" id="1.10.287.70">
    <property type="match status" value="1"/>
</dbReference>
<dbReference type="InterPro" id="IPR049134">
    <property type="entry name" value="MCLN_ECD"/>
</dbReference>
<dbReference type="InterPro" id="IPR047316">
    <property type="entry name" value="ML1_ELD"/>
</dbReference>
<dbReference type="InterPro" id="IPR039031">
    <property type="entry name" value="Mucolipin"/>
</dbReference>
<dbReference type="InterPro" id="IPR013122">
    <property type="entry name" value="PKD1_2_channel"/>
</dbReference>
<dbReference type="PANTHER" id="PTHR12127">
    <property type="entry name" value="MUCOLIPIN"/>
    <property type="match status" value="1"/>
</dbReference>
<dbReference type="PANTHER" id="PTHR12127:SF6">
    <property type="entry name" value="MUCOLIPIN-1"/>
    <property type="match status" value="1"/>
</dbReference>
<dbReference type="Pfam" id="PF21381">
    <property type="entry name" value="MCLN_ECD"/>
    <property type="match status" value="1"/>
</dbReference>
<dbReference type="Pfam" id="PF08016">
    <property type="entry name" value="PKD_channel"/>
    <property type="match status" value="1"/>
</dbReference>
<feature type="chain" id="PRO_0000215364" description="Mucolipin-1">
    <location>
        <begin position="1"/>
        <end position="580"/>
    </location>
</feature>
<feature type="topological domain" description="Cytoplasmic" evidence="12">
    <location>
        <begin position="1"/>
        <end position="65"/>
    </location>
</feature>
<feature type="transmembrane region" description="Helical; Name=1" evidence="12">
    <location>
        <begin position="66"/>
        <end position="86"/>
    </location>
</feature>
<feature type="topological domain" description="Extracellular" evidence="12">
    <location>
        <begin position="87"/>
        <end position="298"/>
    </location>
</feature>
<feature type="transmembrane region" description="Helical; Name=2" evidence="12">
    <location>
        <begin position="299"/>
        <end position="321"/>
    </location>
</feature>
<feature type="topological domain" description="Cytoplasmic" evidence="12">
    <location>
        <begin position="322"/>
        <end position="350"/>
    </location>
</feature>
<feature type="transmembrane region" description="Helical; Name=3" evidence="12">
    <location>
        <begin position="351"/>
        <end position="371"/>
    </location>
</feature>
<feature type="topological domain" description="Extracellular" evidence="12">
    <location>
        <begin position="372"/>
        <end position="382"/>
    </location>
</feature>
<feature type="transmembrane region" description="Helical; Name=4" evidence="12">
    <location>
        <begin position="383"/>
        <end position="405"/>
    </location>
</feature>
<feature type="topological domain" description="Cytoplasmic" evidence="12">
    <location>
        <begin position="406"/>
        <end position="427"/>
    </location>
</feature>
<feature type="transmembrane region" description="Helical; Name=5" evidence="12">
    <location>
        <begin position="428"/>
        <end position="448"/>
    </location>
</feature>
<feature type="topological domain" description="Extracellular" evidence="12">
    <location>
        <begin position="449"/>
        <end position="456"/>
    </location>
</feature>
<feature type="intramembrane region" description="Pore-forming" evidence="12">
    <location>
        <begin position="457"/>
        <end position="477"/>
    </location>
</feature>
<feature type="topological domain" description="Extracellular" evidence="12">
    <location>
        <begin position="478"/>
        <end position="491"/>
    </location>
</feature>
<feature type="transmembrane region" description="Helical; Name=6" evidence="12">
    <location>
        <begin position="492"/>
        <end position="513"/>
    </location>
</feature>
<feature type="topological domain" description="Cytoplasmic" evidence="12">
    <location>
        <begin position="514"/>
        <end position="580"/>
    </location>
</feature>
<feature type="region of interest" description="Disordered" evidence="3">
    <location>
        <begin position="1"/>
        <end position="38"/>
    </location>
</feature>
<feature type="region of interest" description="Interaction with phosphoinositides" evidence="12">
    <location>
        <begin position="42"/>
        <end position="62"/>
    </location>
</feature>
<feature type="region of interest" description="Extracellular/lumenal pore loop" evidence="1">
    <location>
        <begin position="107"/>
        <end position="121"/>
    </location>
</feature>
<feature type="region of interest" description="Required for palmitoylation and association with membranes" evidence="1">
    <location>
        <begin position="565"/>
        <end position="567"/>
    </location>
</feature>
<feature type="short sequence motif" description="Dileucine motif; mediates targeting to lysosomes" evidence="1">
    <location>
        <begin position="11"/>
        <end position="16"/>
    </location>
</feature>
<feature type="short sequence motif" description="Selectivity filter" evidence="12">
    <location>
        <begin position="469"/>
        <end position="474"/>
    </location>
</feature>
<feature type="short sequence motif" description="Dileucine internalization motif; mediates AP2 complex-dependent internalization" evidence="1">
    <location>
        <begin position="573"/>
        <end position="578"/>
    </location>
</feature>
<feature type="modified residue" description="Phosphoserine" evidence="17 18">
    <location>
        <position position="10"/>
    </location>
</feature>
<feature type="modified residue" description="Phosphoserine" evidence="19">
    <location>
        <position position="557"/>
    </location>
</feature>
<feature type="modified residue" description="Phosphoserine; by PAK" evidence="1">
    <location>
        <position position="559"/>
    </location>
</feature>
<feature type="glycosylation site" description="N-linked (GlcNAc...) asparagine" evidence="2">
    <location>
        <position position="220"/>
    </location>
</feature>
<feature type="glycosylation site" description="N-linked (GlcNAc...) asparagine" evidence="11 12">
    <location>
        <position position="230"/>
    </location>
</feature>
<feature type="disulfide bond" evidence="1">
    <location>
        <begin position="166"/>
        <end position="192"/>
    </location>
</feature>
<feature type="disulfide bond" evidence="1">
    <location>
        <begin position="253"/>
        <end position="284"/>
    </location>
</feature>
<feature type="splice variant" id="VSP_010821" description="In isoform 2." evidence="13">
    <original>HPGGTGTEKSELQAYIEQCQDSPTSGKFRRGSGSACSLFCCCGRDSPEDHSLLVN</original>
    <variation>RTNHRNWFSSFTVWIIDLNTSYQLCSKCLYLPHHLTGFLPLSYHLLLKTIYLFRGERRLCTAQCVWKLETTCGNQLSSSTMWSHQV</variation>
    <location>
        <begin position="526"/>
        <end position="580"/>
    </location>
</feature>
<feature type="mutagenesis site" description="Loss of Fe(2+) transport; when associated with P-432." evidence="7">
    <original>T</original>
    <variation>P</variation>
    <location>
        <position position="232"/>
    </location>
</feature>
<feature type="mutagenesis site" description="Loss of Fe(2+) transport; when associated with P-432." evidence="7">
    <original>D</original>
    <variation>Y</variation>
    <location>
        <position position="362"/>
    </location>
</feature>
<feature type="mutagenesis site" description="Loss of Fe(2+) transport; when associated with P-432." evidence="7">
    <original>R</original>
    <variation>C</variation>
    <location>
        <position position="403"/>
    </location>
</feature>
<feature type="mutagenesis site" description="Decreased Fe(2+) transport; when associated with P-432." evidence="7">
    <location>
        <position position="408"/>
    </location>
</feature>
<feature type="mutagenesis site" description="Constitutively active channel that is targeted to the plasma membrane, and mediates strong inwardly rectifying current." evidence="6 7 12">
    <original>V</original>
    <variation>P</variation>
    <location>
        <position position="432"/>
    </location>
</feature>
<feature type="mutagenesis site" description="Loss of Fe(2+) transport; when associated with P-432." evidence="7">
    <original>V</original>
    <variation>L</variation>
    <location>
        <position position="446"/>
    </location>
</feature>
<feature type="mutagenesis site" description="Loss of Fe(2+) transport; when associated with P-432." evidence="7">
    <original>F</original>
    <variation>L</variation>
    <location>
        <position position="465"/>
    </location>
</feature>
<feature type="helix" evidence="21">
    <location>
        <begin position="43"/>
        <end position="48"/>
    </location>
</feature>
<feature type="helix" evidence="21">
    <location>
        <begin position="52"/>
        <end position="58"/>
    </location>
</feature>
<feature type="helix" evidence="21">
    <location>
        <begin position="64"/>
        <end position="105"/>
    </location>
</feature>
<feature type="turn" evidence="21">
    <location>
        <begin position="114"/>
        <end position="116"/>
    </location>
</feature>
<feature type="helix" evidence="21">
    <location>
        <begin position="122"/>
        <end position="137"/>
    </location>
</feature>
<feature type="helix" evidence="21">
    <location>
        <begin position="139"/>
        <end position="142"/>
    </location>
</feature>
<feature type="strand" evidence="21">
    <location>
        <begin position="143"/>
        <end position="145"/>
    </location>
</feature>
<feature type="turn" evidence="20">
    <location>
        <begin position="151"/>
        <end position="154"/>
    </location>
</feature>
<feature type="strand" evidence="20">
    <location>
        <begin position="158"/>
        <end position="160"/>
    </location>
</feature>
<feature type="strand" evidence="21">
    <location>
        <begin position="162"/>
        <end position="173"/>
    </location>
</feature>
<feature type="helix" evidence="21">
    <location>
        <begin position="177"/>
        <end position="179"/>
    </location>
</feature>
<feature type="strand" evidence="21">
    <location>
        <begin position="184"/>
        <end position="195"/>
    </location>
</feature>
<feature type="helix" evidence="21">
    <location>
        <begin position="218"/>
        <end position="220"/>
    </location>
</feature>
<feature type="helix" evidence="21">
    <location>
        <begin position="225"/>
        <end position="227"/>
    </location>
</feature>
<feature type="strand" evidence="21">
    <location>
        <begin position="228"/>
        <end position="240"/>
    </location>
</feature>
<feature type="helix" evidence="21">
    <location>
        <begin position="242"/>
        <end position="247"/>
    </location>
</feature>
<feature type="strand" evidence="21">
    <location>
        <begin position="252"/>
        <end position="263"/>
    </location>
</feature>
<feature type="strand" evidence="21">
    <location>
        <begin position="271"/>
        <end position="283"/>
    </location>
</feature>
<feature type="strand" evidence="22">
    <location>
        <begin position="285"/>
        <end position="289"/>
    </location>
</feature>
<feature type="helix" evidence="21">
    <location>
        <begin position="298"/>
        <end position="337"/>
    </location>
</feature>
<feature type="strand" evidence="21">
    <location>
        <begin position="338"/>
        <end position="341"/>
    </location>
</feature>
<feature type="helix" evidence="21">
    <location>
        <begin position="346"/>
        <end position="349"/>
    </location>
</feature>
<feature type="helix" evidence="21">
    <location>
        <begin position="353"/>
        <end position="376"/>
    </location>
</feature>
<feature type="helix" evidence="21">
    <location>
        <begin position="383"/>
        <end position="400"/>
    </location>
</feature>
<feature type="helix" evidence="21">
    <location>
        <begin position="401"/>
        <end position="405"/>
    </location>
</feature>
<feature type="strand" evidence="20">
    <location>
        <begin position="406"/>
        <end position="408"/>
    </location>
</feature>
<feature type="helix" evidence="21">
    <location>
        <begin position="409"/>
        <end position="411"/>
    </location>
</feature>
<feature type="helix" evidence="21">
    <location>
        <begin position="413"/>
        <end position="447"/>
    </location>
</feature>
<feature type="turn" evidence="21">
    <location>
        <begin position="448"/>
        <end position="450"/>
    </location>
</feature>
<feature type="helix" evidence="21">
    <location>
        <begin position="452"/>
        <end position="454"/>
    </location>
</feature>
<feature type="helix" evidence="21">
    <location>
        <begin position="457"/>
        <end position="468"/>
    </location>
</feature>
<feature type="helix" evidence="21">
    <location>
        <begin position="473"/>
        <end position="483"/>
    </location>
</feature>
<feature type="helix" evidence="21">
    <location>
        <begin position="484"/>
        <end position="486"/>
    </location>
</feature>
<feature type="helix" evidence="21">
    <location>
        <begin position="488"/>
        <end position="507"/>
    </location>
</feature>
<feature type="helix" evidence="21">
    <location>
        <begin position="509"/>
        <end position="524"/>
    </location>
</feature>
<accession>Q99J21</accession>
<reference key="1">
    <citation type="journal article" date="2002" name="BMC Genomics">
        <title>Cloning and characterization of the mouse Mcoln1 gene reveals an alternatively spliced transcript not seen in humans.</title>
        <authorList>
            <person name="Falardeau J.L."/>
            <person name="Kennedy J.C."/>
            <person name="Acierno J.S. Jr."/>
            <person name="Sun M."/>
            <person name="Stahl S."/>
            <person name="Goldin E."/>
            <person name="Slaugenhaupt S.A."/>
        </authorList>
    </citation>
    <scope>NUCLEOTIDE SEQUENCE [MRNA] (ISOFORMS 1 AND 2)</scope>
    <scope>TISSUE SPECIFICITY</scope>
</reference>
<reference key="2">
    <citation type="journal article" date="2005" name="Science">
        <title>The transcriptional landscape of the mammalian genome.</title>
        <authorList>
            <person name="Carninci P."/>
            <person name="Kasukawa T."/>
            <person name="Katayama S."/>
            <person name="Gough J."/>
            <person name="Frith M.C."/>
            <person name="Maeda N."/>
            <person name="Oyama R."/>
            <person name="Ravasi T."/>
            <person name="Lenhard B."/>
            <person name="Wells C."/>
            <person name="Kodzius R."/>
            <person name="Shimokawa K."/>
            <person name="Bajic V.B."/>
            <person name="Brenner S.E."/>
            <person name="Batalov S."/>
            <person name="Forrest A.R."/>
            <person name="Zavolan M."/>
            <person name="Davis M.J."/>
            <person name="Wilming L.G."/>
            <person name="Aidinis V."/>
            <person name="Allen J.E."/>
            <person name="Ambesi-Impiombato A."/>
            <person name="Apweiler R."/>
            <person name="Aturaliya R.N."/>
            <person name="Bailey T.L."/>
            <person name="Bansal M."/>
            <person name="Baxter L."/>
            <person name="Beisel K.W."/>
            <person name="Bersano T."/>
            <person name="Bono H."/>
            <person name="Chalk A.M."/>
            <person name="Chiu K.P."/>
            <person name="Choudhary V."/>
            <person name="Christoffels A."/>
            <person name="Clutterbuck D.R."/>
            <person name="Crowe M.L."/>
            <person name="Dalla E."/>
            <person name="Dalrymple B.P."/>
            <person name="de Bono B."/>
            <person name="Della Gatta G."/>
            <person name="di Bernardo D."/>
            <person name="Down T."/>
            <person name="Engstrom P."/>
            <person name="Fagiolini M."/>
            <person name="Faulkner G."/>
            <person name="Fletcher C.F."/>
            <person name="Fukushima T."/>
            <person name="Furuno M."/>
            <person name="Futaki S."/>
            <person name="Gariboldi M."/>
            <person name="Georgii-Hemming P."/>
            <person name="Gingeras T.R."/>
            <person name="Gojobori T."/>
            <person name="Green R.E."/>
            <person name="Gustincich S."/>
            <person name="Harbers M."/>
            <person name="Hayashi Y."/>
            <person name="Hensch T.K."/>
            <person name="Hirokawa N."/>
            <person name="Hill D."/>
            <person name="Huminiecki L."/>
            <person name="Iacono M."/>
            <person name="Ikeo K."/>
            <person name="Iwama A."/>
            <person name="Ishikawa T."/>
            <person name="Jakt M."/>
            <person name="Kanapin A."/>
            <person name="Katoh M."/>
            <person name="Kawasawa Y."/>
            <person name="Kelso J."/>
            <person name="Kitamura H."/>
            <person name="Kitano H."/>
            <person name="Kollias G."/>
            <person name="Krishnan S.P."/>
            <person name="Kruger A."/>
            <person name="Kummerfeld S.K."/>
            <person name="Kurochkin I.V."/>
            <person name="Lareau L.F."/>
            <person name="Lazarevic D."/>
            <person name="Lipovich L."/>
            <person name="Liu J."/>
            <person name="Liuni S."/>
            <person name="McWilliam S."/>
            <person name="Madan Babu M."/>
            <person name="Madera M."/>
            <person name="Marchionni L."/>
            <person name="Matsuda H."/>
            <person name="Matsuzawa S."/>
            <person name="Miki H."/>
            <person name="Mignone F."/>
            <person name="Miyake S."/>
            <person name="Morris K."/>
            <person name="Mottagui-Tabar S."/>
            <person name="Mulder N."/>
            <person name="Nakano N."/>
            <person name="Nakauchi H."/>
            <person name="Ng P."/>
            <person name="Nilsson R."/>
            <person name="Nishiguchi S."/>
            <person name="Nishikawa S."/>
            <person name="Nori F."/>
            <person name="Ohara O."/>
            <person name="Okazaki Y."/>
            <person name="Orlando V."/>
            <person name="Pang K.C."/>
            <person name="Pavan W.J."/>
            <person name="Pavesi G."/>
            <person name="Pesole G."/>
            <person name="Petrovsky N."/>
            <person name="Piazza S."/>
            <person name="Reed J."/>
            <person name="Reid J.F."/>
            <person name="Ring B.Z."/>
            <person name="Ringwald M."/>
            <person name="Rost B."/>
            <person name="Ruan Y."/>
            <person name="Salzberg S.L."/>
            <person name="Sandelin A."/>
            <person name="Schneider C."/>
            <person name="Schoenbach C."/>
            <person name="Sekiguchi K."/>
            <person name="Semple C.A."/>
            <person name="Seno S."/>
            <person name="Sessa L."/>
            <person name="Sheng Y."/>
            <person name="Shibata Y."/>
            <person name="Shimada H."/>
            <person name="Shimada K."/>
            <person name="Silva D."/>
            <person name="Sinclair B."/>
            <person name="Sperling S."/>
            <person name="Stupka E."/>
            <person name="Sugiura K."/>
            <person name="Sultana R."/>
            <person name="Takenaka Y."/>
            <person name="Taki K."/>
            <person name="Tammoja K."/>
            <person name="Tan S.L."/>
            <person name="Tang S."/>
            <person name="Taylor M.S."/>
            <person name="Tegner J."/>
            <person name="Teichmann S.A."/>
            <person name="Ueda H.R."/>
            <person name="van Nimwegen E."/>
            <person name="Verardo R."/>
            <person name="Wei C.L."/>
            <person name="Yagi K."/>
            <person name="Yamanishi H."/>
            <person name="Zabarovsky E."/>
            <person name="Zhu S."/>
            <person name="Zimmer A."/>
            <person name="Hide W."/>
            <person name="Bult C."/>
            <person name="Grimmond S.M."/>
            <person name="Teasdale R.D."/>
            <person name="Liu E.T."/>
            <person name="Brusic V."/>
            <person name="Quackenbush J."/>
            <person name="Wahlestedt C."/>
            <person name="Mattick J.S."/>
            <person name="Hume D.A."/>
            <person name="Kai C."/>
            <person name="Sasaki D."/>
            <person name="Tomaru Y."/>
            <person name="Fukuda S."/>
            <person name="Kanamori-Katayama M."/>
            <person name="Suzuki M."/>
            <person name="Aoki J."/>
            <person name="Arakawa T."/>
            <person name="Iida J."/>
            <person name="Imamura K."/>
            <person name="Itoh M."/>
            <person name="Kato T."/>
            <person name="Kawaji H."/>
            <person name="Kawagashira N."/>
            <person name="Kawashima T."/>
            <person name="Kojima M."/>
            <person name="Kondo S."/>
            <person name="Konno H."/>
            <person name="Nakano K."/>
            <person name="Ninomiya N."/>
            <person name="Nishio T."/>
            <person name="Okada M."/>
            <person name="Plessy C."/>
            <person name="Shibata K."/>
            <person name="Shiraki T."/>
            <person name="Suzuki S."/>
            <person name="Tagami M."/>
            <person name="Waki K."/>
            <person name="Watahiki A."/>
            <person name="Okamura-Oho Y."/>
            <person name="Suzuki H."/>
            <person name="Kawai J."/>
            <person name="Hayashizaki Y."/>
        </authorList>
    </citation>
    <scope>NUCLEOTIDE SEQUENCE [LARGE SCALE MRNA] (ISOFORM 1)</scope>
    <source>
        <tissue>Diencephalon</tissue>
        <tissue>Extraembryonic tissue</tissue>
        <tissue>Placenta</tissue>
        <tissue>Spinal cord</tissue>
    </source>
</reference>
<reference key="3">
    <citation type="journal article" date="2004" name="Genome Res.">
        <title>The status, quality, and expansion of the NIH full-length cDNA project: the Mammalian Gene Collection (MGC).</title>
        <authorList>
            <consortium name="The MGC Project Team"/>
        </authorList>
    </citation>
    <scope>NUCLEOTIDE SEQUENCE [LARGE SCALE MRNA] (ISOFORM 1)</scope>
    <source>
        <tissue>Mammary tumor</tissue>
    </source>
</reference>
<reference key="4">
    <citation type="journal article" date="2004" name="Mol. Cell. Proteomics">
        <title>Phosphoproteomic analysis of the developing mouse brain.</title>
        <authorList>
            <person name="Ballif B.A."/>
            <person name="Villen J."/>
            <person name="Beausoleil S.A."/>
            <person name="Schwartz D."/>
            <person name="Gygi S.P."/>
        </authorList>
    </citation>
    <scope>IDENTIFICATION BY MASS SPECTROMETRY [LARGE SCALE ANALYSIS]</scope>
    <source>
        <tissue>Embryonic brain</tissue>
    </source>
</reference>
<reference key="5">
    <citation type="journal article" date="2006" name="Eur. J. Cell Biol.">
        <title>TRPML cation channels regulate the specialized lysosomal compartment of vertebrate B-lymphocytes.</title>
        <authorList>
            <person name="Song Y."/>
            <person name="Dayalu R."/>
            <person name="Matthews S.A."/>
            <person name="Scharenberg A.M."/>
        </authorList>
    </citation>
    <scope>FUNCTION</scope>
</reference>
<reference key="6">
    <citation type="journal article" date="2007" name="Mol. Cell. Proteomics">
        <title>Mitochondrial phosphoproteome revealed by an improved IMAC method and MS/MS/MS.</title>
        <authorList>
            <person name="Lee J."/>
            <person name="Xu Y."/>
            <person name="Chen Y."/>
            <person name="Sprung R."/>
            <person name="Kim S.C."/>
            <person name="Xie S."/>
            <person name="Zhao Y."/>
        </authorList>
    </citation>
    <scope>PHOSPHORYLATION [LARGE SCALE ANALYSIS] AT SER-10</scope>
    <scope>IDENTIFICATION BY MASS SPECTROMETRY [LARGE SCALE ANALYSIS]</scope>
    <source>
        <tissue>Liver</tissue>
    </source>
</reference>
<reference key="7">
    <citation type="journal article" date="2007" name="Proc. Natl. Acad. Sci. U.S.A.">
        <title>Activating mutation in a mucolipin transient receptor potential channel leads to melanocyte loss in varitint-waddler mice.</title>
        <authorList>
            <person name="Xu H."/>
            <person name="Delling M."/>
            <person name="Li L."/>
            <person name="Dong X."/>
            <person name="Clapham D.E."/>
        </authorList>
    </citation>
    <scope>FUNCTION</scope>
    <scope>TRANSPORTER ACTIVITY</scope>
    <scope>MUTAGENESIS OF VAL-432</scope>
</reference>
<reference key="8">
    <citation type="journal article" date="2008" name="Nature">
        <title>The type IV mucolipidosis-associated protein TRPML1 is an endolysosomal iron release channel.</title>
        <authorList>
            <person name="Dong X.P."/>
            <person name="Cheng X."/>
            <person name="Mills E."/>
            <person name="Delling M."/>
            <person name="Wang F."/>
            <person name="Kurz T."/>
            <person name="Xu H."/>
        </authorList>
    </citation>
    <scope>FUNCTION</scope>
    <scope>MUTAGENESIS OF THR-232; ASP-362; ARG-403; PHE-408; VAL-432; VAL-446 AND PHE-465</scope>
    <scope>TRANSPORTER ACTIVITY</scope>
    <scope>ACTIVITY REGULATION</scope>
</reference>
<reference key="9">
    <citation type="journal article" date="2009" name="Immunity">
        <title>The phagosomal proteome in interferon-gamma-activated macrophages.</title>
        <authorList>
            <person name="Trost M."/>
            <person name="English L."/>
            <person name="Lemieux S."/>
            <person name="Courcelles M."/>
            <person name="Desjardins M."/>
            <person name="Thibault P."/>
        </authorList>
    </citation>
    <scope>PHOSPHORYLATION [LARGE SCALE ANALYSIS] AT SER-10</scope>
    <scope>IDENTIFICATION BY MASS SPECTROMETRY [LARGE SCALE ANALYSIS]</scope>
</reference>
<reference key="10">
    <citation type="journal article" date="2010" name="Cell">
        <title>A tissue-specific atlas of mouse protein phosphorylation and expression.</title>
        <authorList>
            <person name="Huttlin E.L."/>
            <person name="Jedrychowski M.P."/>
            <person name="Elias J.E."/>
            <person name="Goswami T."/>
            <person name="Rad R."/>
            <person name="Beausoleil S.A."/>
            <person name="Villen J."/>
            <person name="Haas W."/>
            <person name="Sowa M.E."/>
            <person name="Gygi S.P."/>
        </authorList>
    </citation>
    <scope>PHOSPHORYLATION [LARGE SCALE ANALYSIS] AT SER-557</scope>
    <scope>IDENTIFICATION BY MASS SPECTROMETRY [LARGE SCALE ANALYSIS]</scope>
    <source>
        <tissue>Brain</tissue>
        <tissue>Brown adipose tissue</tissue>
        <tissue>Kidney</tissue>
        <tissue>Liver</tissue>
        <tissue>Testis</tissue>
    </source>
</reference>
<reference key="11">
    <citation type="journal article" date="2013" name="Dev. Cell">
        <title>A TRP channel in the lysosome regulates large particle phagocytosis via focal exocytosis.</title>
        <authorList>
            <person name="Samie M."/>
            <person name="Wang X."/>
            <person name="Zhang X."/>
            <person name="Goschka A."/>
            <person name="Li X."/>
            <person name="Cheng X."/>
            <person name="Gregg E."/>
            <person name="Azar M."/>
            <person name="Zhuo Y."/>
            <person name="Garrity A.G."/>
            <person name="Gao Q."/>
            <person name="Slaugenhaupt S."/>
            <person name="Pickel J."/>
            <person name="Zolov S.N."/>
            <person name="Weisman L.S."/>
            <person name="Lenk G.M."/>
            <person name="Titus S."/>
            <person name="Bryant-Genevier M."/>
            <person name="Southall N."/>
            <person name="Juan M."/>
            <person name="Ferrer M."/>
            <person name="Xu H."/>
        </authorList>
    </citation>
    <scope>FUNCTION</scope>
    <scope>SUBCELLULAR LOCATION</scope>
</reference>
<reference key="12">
    <citation type="journal article" date="2015" name="Proc. Natl. Acad. Sci. U.S.A.">
        <title>Up-regulation of lysosomal TRPML1 channels is essential for lysosomal adaptation to nutrient starvation.</title>
        <authorList>
            <person name="Wang W."/>
            <person name="Gao Q."/>
            <person name="Yang M."/>
            <person name="Zhang X."/>
            <person name="Yu L."/>
            <person name="Lawas M."/>
            <person name="Li X."/>
            <person name="Bryant-Genevier M."/>
            <person name="Southall N.T."/>
            <person name="Marugan J."/>
            <person name="Ferrer M."/>
            <person name="Xu H."/>
        </authorList>
    </citation>
    <scope>FUNCTION</scope>
    <scope>INDUCTION</scope>
</reference>
<reference key="13">
    <citation type="journal article" date="2016" name="Dev. Cell">
        <title>PIKfyve Regulates Vacuole Maturation and Nutrient Recovery following Engulfment.</title>
        <authorList>
            <person name="Krishna S."/>
            <person name="Palm W."/>
            <person name="Lee Y."/>
            <person name="Yang W."/>
            <person name="Bandyopadhyay U."/>
            <person name="Xu H."/>
            <person name="Florey O."/>
            <person name="Thompson C.B."/>
            <person name="Overholtzer M."/>
        </authorList>
    </citation>
    <scope>FUNCTION</scope>
</reference>
<reference key="14">
    <citation type="journal article" date="2017" name="Nature">
        <title>Structure of mammalian endolysosomal TRPML1 channel in nanodiscs.</title>
        <authorList>
            <person name="Chen Q."/>
            <person name="She J."/>
            <person name="Zeng W."/>
            <person name="Guo J."/>
            <person name="Xu H."/>
            <person name="Bai X.C."/>
            <person name="Jiang Y."/>
        </authorList>
    </citation>
    <scope>STRUCTURE BY ELECTRON MICROSCOPY (3.59 ANGSTROMS)</scope>
    <scope>FUNCTION</scope>
    <scope>ACTIVITY REGULATION</scope>
    <scope>TOPOLOGY</scope>
    <scope>SUBUNIT</scope>
    <scope>GLYCOSYLATION AT ASN-230</scope>
    <scope>MUTAGENESIS OF VAL-432</scope>
</reference>
<reference key="15">
    <citation type="journal article" date="2017" name="Protein Cell">
        <title>Cryo-EM structures of the mammalian endo-lysosomal TRPML1 channel elucidate the combined regulation mechanism.</title>
        <authorList>
            <person name="Zhang S."/>
            <person name="Li N."/>
            <person name="Zeng W."/>
            <person name="Gao N."/>
            <person name="Yang M."/>
        </authorList>
    </citation>
    <scope>STRUCTURE BY ELECTRON MICROSCOPY (5.4 ANGSTROMS)</scope>
    <scope>SUBUNIT</scope>
    <scope>TOPOLOGY</scope>
    <scope>GLYCOSYLATION AT ASN-230</scope>
</reference>
<evidence type="ECO:0000250" key="1">
    <source>
        <dbReference type="UniProtKB" id="Q9GZU1"/>
    </source>
</evidence>
<evidence type="ECO:0000255" key="2"/>
<evidence type="ECO:0000256" key="3">
    <source>
        <dbReference type="SAM" id="MobiDB-lite"/>
    </source>
</evidence>
<evidence type="ECO:0000269" key="4">
    <source>
    </source>
</evidence>
<evidence type="ECO:0000269" key="5">
    <source>
    </source>
</evidence>
<evidence type="ECO:0000269" key="6">
    <source>
    </source>
</evidence>
<evidence type="ECO:0000269" key="7">
    <source>
    </source>
</evidence>
<evidence type="ECO:0000269" key="8">
    <source>
    </source>
</evidence>
<evidence type="ECO:0000269" key="9">
    <source>
    </source>
</evidence>
<evidence type="ECO:0000269" key="10">
    <source>
    </source>
</evidence>
<evidence type="ECO:0000269" key="11">
    <source>
    </source>
</evidence>
<evidence type="ECO:0000269" key="12">
    <source>
    </source>
</evidence>
<evidence type="ECO:0000303" key="13">
    <source>
    </source>
</evidence>
<evidence type="ECO:0000303" key="14">
    <source>
    </source>
</evidence>
<evidence type="ECO:0000305" key="15"/>
<evidence type="ECO:0000312" key="16">
    <source>
        <dbReference type="MGI" id="MGI:1890498"/>
    </source>
</evidence>
<evidence type="ECO:0007744" key="17">
    <source>
    </source>
</evidence>
<evidence type="ECO:0007744" key="18">
    <source>
    </source>
</evidence>
<evidence type="ECO:0007744" key="19">
    <source>
    </source>
</evidence>
<evidence type="ECO:0007829" key="20">
    <source>
        <dbReference type="PDB" id="7SQ6"/>
    </source>
</evidence>
<evidence type="ECO:0007829" key="21">
    <source>
        <dbReference type="PDB" id="7SQ9"/>
    </source>
</evidence>
<evidence type="ECO:0007829" key="22">
    <source>
        <dbReference type="PDB" id="9CBZ"/>
    </source>
</evidence>
<proteinExistence type="evidence at protein level"/>
<organism>
    <name type="scientific">Mus musculus</name>
    <name type="common">Mouse</name>
    <dbReference type="NCBI Taxonomy" id="10090"/>
    <lineage>
        <taxon>Eukaryota</taxon>
        <taxon>Metazoa</taxon>
        <taxon>Chordata</taxon>
        <taxon>Craniata</taxon>
        <taxon>Vertebrata</taxon>
        <taxon>Euteleostomi</taxon>
        <taxon>Mammalia</taxon>
        <taxon>Eutheria</taxon>
        <taxon>Euarchontoglires</taxon>
        <taxon>Glires</taxon>
        <taxon>Rodentia</taxon>
        <taxon>Myomorpha</taxon>
        <taxon>Muroidea</taxon>
        <taxon>Muridae</taxon>
        <taxon>Murinae</taxon>
        <taxon>Mus</taxon>
        <taxon>Mus</taxon>
    </lineage>
</organism>
<protein>
    <recommendedName>
        <fullName evidence="15">Mucolipin-1</fullName>
    </recommendedName>
    <alternativeName>
        <fullName>Mucolipidin</fullName>
    </alternativeName>
    <alternativeName>
        <fullName>Transient receptor potential-mucolipin 1</fullName>
        <shortName evidence="14">TRPML1</shortName>
    </alternativeName>
</protein>
<comment type="function">
    <text evidence="1 5 6 7 8 9 10 12">Nonselective cation channel probably playing a role in the regulation of membrane trafficking events and of metal homeostasis (PubMed:17989217, PubMed:18794901, PubMed:29019981). Acts as a Ca(2+)-permeable cation channel with inwardly rectifying activity (PubMed:17989217). Proposed to play a major role in Ca(2+) release from late endosome and lysosome vesicles to the cytoplasm, which is important for many lysosome-dependent cellular events, including the fusion and trafficking of these organelles, exocytosis and autophagy. Required for efficient uptake of large particles in macrophages in which Ca(2+) release from the lysosomes triggers lysosomal exocytosis. May also play a role in phagosome-lysosome fusion (PubMed:23993788, PubMed:27623384). Involved in lactosylceramide trafficking indicative for a role in the regulation of late endocytic membrane fusion/fission events. By mediating lysosomal Ca(2+) release is involved in regulation of mTORC1 signaling and in mTOR/TFEB-dependent lysosomal adaptation to environmental cues such as nutrient levels (PubMed:25733853). Seems to act as lysosomal active oxygen species (ROS) sensor involved in ROS-induced TFEB activation and autophagy (By similarity). Also functions as a Fe(2+) permeable channel in late endosomes and lysosomes (PubMed:18794901). Also permeable to Mg(2+), Na(+). K(+) and Cs(+) (PubMed:17989217). Proposed to play a role in zinc homeostasis probably implicating its association with TMEM163 (By similarity). In adaptive immunity, TRPML2 and TRPML1 may play redundant roles in the function of the specialized lysosomes of B cells (PubMed:17050035).</text>
</comment>
<comment type="function">
    <text evidence="1">May contribute to cellular lipase activity within the late endosomal pathway or at the cell surface which may be involved in processes of membrane reshaping and vesiculation, especially the growth of tubular structures. However, it is not known, whether it conveys the enzymatic activity directly, or merely facilitates the activity of an associated phospholipase.</text>
</comment>
<comment type="catalytic activity">
    <reaction evidence="6">
        <text>Ca(2+)(in) = Ca(2+)(out)</text>
        <dbReference type="Rhea" id="RHEA:29671"/>
        <dbReference type="ChEBI" id="CHEBI:29108"/>
    </reaction>
</comment>
<comment type="catalytic activity">
    <reaction evidence="7">
        <text>Fe(2+)(in) = Fe(2+)(out)</text>
        <dbReference type="Rhea" id="RHEA:28486"/>
        <dbReference type="ChEBI" id="CHEBI:29033"/>
    </reaction>
</comment>
<comment type="catalytic activity">
    <reaction evidence="6">
        <text>Mg(2+)(in) = Mg(2+)(out)</text>
        <dbReference type="Rhea" id="RHEA:29827"/>
        <dbReference type="ChEBI" id="CHEBI:18420"/>
    </reaction>
</comment>
<comment type="catalytic activity">
    <reaction evidence="6">
        <text>K(+)(in) = K(+)(out)</text>
        <dbReference type="Rhea" id="RHEA:29463"/>
        <dbReference type="ChEBI" id="CHEBI:29103"/>
    </reaction>
</comment>
<comment type="catalytic activity">
    <reaction evidence="6">
        <text>Na(+)(in) = Na(+)(out)</text>
        <dbReference type="Rhea" id="RHEA:34963"/>
        <dbReference type="ChEBI" id="CHEBI:29101"/>
    </reaction>
</comment>
<comment type="activity regulation">
    <text evidence="1 7 12">Channel activity is controlled by multiple regulatory mechanisms in different subcellular compartments (By similarity). Lower pH by itself has an inhibitory effect on channel conductance. Channel function is transiently modulated by changes in Ca(2+) in a pH-dependent manner; pH changes modify the aggregation state of unitary channels; a negative cooperativity between extracellular/lumenal Ca(2+) and H(+) is suggested (PubMed:29019981). Fe(2+) channel activity is potentiated by low pH (PubMed:18794901). Regulated by phosphoinositides in a compartment-specific manner: in lysosomes activated by PtdIns(3,5)P2 (Phosphatidylinositol 3,5-bisphosphate) and at the plasma membrane inhibited by PtdIns(4,5)P2 (Phosphatidylinositol 4,5-bisphosphate) (PubMed:29019981).</text>
</comment>
<comment type="subunit">
    <text evidence="1 12">Homotetramer (PubMed:29019981). Homooligomer. Can heterooligomerize with MCOLN2 or MCOLN3; heteromeric assemblies have different channel properties as compared to the respective homooligomers and may be tissue-specific. Interacts with PDCD6. Interacts with TMEM163. Interacts with LAPTM4B (By similarity).</text>
</comment>
<comment type="subcellular location">
    <subcellularLocation>
        <location evidence="1">Late endosome membrane</location>
        <topology evidence="12">Multi-pass membrane protein</topology>
    </subcellularLocation>
    <subcellularLocation>
        <location evidence="1">Lysosome membrane</location>
        <topology evidence="12">Multi-pass membrane protein</topology>
    </subcellularLocation>
    <subcellularLocation>
        <location evidence="1">Cytoplasmic vesicle membrane</location>
        <topology evidence="12">Multi-pass membrane protein</topology>
    </subcellularLocation>
    <subcellularLocation>
        <location evidence="8">Cell projection</location>
        <location evidence="8">Phagocytic cup</location>
    </subcellularLocation>
    <subcellularLocation>
        <location evidence="8">Cytoplasmic vesicle</location>
        <location evidence="8">Phagosome membrane</location>
        <topology evidence="12">Multi-pass membrane protein</topology>
    </subcellularLocation>
    <subcellularLocation>
        <location evidence="1">Cell membrane</location>
        <topology evidence="12">Multi-pass membrane protein</topology>
    </subcellularLocation>
    <text evidence="1 12">Delivery from the trans-Golgi to lysosomes seems to occur mainly in a direct intracellular manner without intermediate delivery to the plasma membrane (By similarity). Under normal conditions, restricted to intracellular compartments so that only a very minor proportion is present at the cell membrane (PubMed:29019981).</text>
</comment>
<comment type="alternative products">
    <event type="alternative splicing"/>
    <isoform>
        <id>Q99J21-1</id>
        <name>1</name>
        <sequence type="displayed"/>
    </isoform>
    <isoform>
        <id>Q99J21-2</id>
        <name>2</name>
        <sequence type="described" ref="VSP_010821"/>
    </isoform>
</comment>
<comment type="tissue specificity">
    <text evidence="4">Widely expressed, with the highest expression in brain, liver and kidney.</text>
</comment>
<comment type="induction">
    <text evidence="9">Up-regulated by nutrient starvation.</text>
</comment>
<comment type="domain">
    <text evidence="1">The most N-terminal extracellular/lumenal domain (referred to as I-II linker or polycystin-mucolipin domain) contributes to a structure with a four-fold rotational symmetry in a tetrameric assembly; the structure contains a central highly electronegative pore with a 14 A diameter. The pore is critical for Ca(2+) and pH regulation. The protruding structure formed by the I-II linkers may contain all the interaction sites with lipids and proteins in the endolysosomal lumen.</text>
</comment>
<comment type="PTM">
    <text evidence="1">Palmitoylated; involved in association with membranes.</text>
</comment>
<comment type="PTM">
    <text evidence="1">Phosphorylation by PKA inhibits channel activity. Dephosphorylation increases activity.</text>
</comment>
<comment type="PTM">
    <text evidence="1">Proteolytically cleaved probably involving multiple lysosomal proteases including cathepsin B; inhibits lysosomal channel activity.</text>
</comment>
<comment type="similarity">
    <text evidence="15">Belongs to the transient receptor (TC 1.A.4) family. Polycystin subfamily. MCOLN1 sub-subfamily.</text>
</comment>
<gene>
    <name evidence="16" type="primary">Mcoln1</name>
    <name evidence="14" type="synonym">Trpml1</name>
</gene>
<keyword id="KW-0002">3D-structure</keyword>
<keyword id="KW-1064">Adaptive immunity</keyword>
<keyword id="KW-0025">Alternative splicing</keyword>
<keyword id="KW-0106">Calcium</keyword>
<keyword id="KW-0109">Calcium transport</keyword>
<keyword id="KW-1003">Cell membrane</keyword>
<keyword id="KW-0966">Cell projection</keyword>
<keyword id="KW-0968">Cytoplasmic vesicle</keyword>
<keyword id="KW-1015">Disulfide bond</keyword>
<keyword id="KW-0967">Endosome</keyword>
<keyword id="KW-0325">Glycoprotein</keyword>
<keyword id="KW-0391">Immunity</keyword>
<keyword id="KW-0407">Ion channel</keyword>
<keyword id="KW-0406">Ion transport</keyword>
<keyword id="KW-0446">Lipid-binding</keyword>
<keyword id="KW-0458">Lysosome</keyword>
<keyword id="KW-0472">Membrane</keyword>
<keyword id="KW-0597">Phosphoprotein</keyword>
<keyword id="KW-1185">Reference proteome</keyword>
<keyword id="KW-0812">Transmembrane</keyword>
<keyword id="KW-1133">Transmembrane helix</keyword>
<keyword id="KW-0813">Transport</keyword>